<reference key="1">
    <citation type="journal article" date="2007" name="Genome Biol.">
        <title>Comparison of Francisella tularensis genomes reveals evolutionary events associated with the emergence of human pathogenic strains.</title>
        <authorList>
            <person name="Rohmer L."/>
            <person name="Fong C."/>
            <person name="Abmayr S."/>
            <person name="Wasnick M."/>
            <person name="Larson Freeman T.J."/>
            <person name="Radey M."/>
            <person name="Guina T."/>
            <person name="Svensson K."/>
            <person name="Hayden H.S."/>
            <person name="Jacobs M."/>
            <person name="Gallagher L.A."/>
            <person name="Manoil C."/>
            <person name="Ernst R.K."/>
            <person name="Drees B."/>
            <person name="Buckley D."/>
            <person name="Haugen E."/>
            <person name="Bovee D."/>
            <person name="Zhou Y."/>
            <person name="Chang J."/>
            <person name="Levy R."/>
            <person name="Lim R."/>
            <person name="Gillett W."/>
            <person name="Guenthener D."/>
            <person name="Kang A."/>
            <person name="Shaffer S.A."/>
            <person name="Taylor G."/>
            <person name="Chen J."/>
            <person name="Gallis B."/>
            <person name="D'Argenio D.A."/>
            <person name="Forsman M."/>
            <person name="Olson M.V."/>
            <person name="Goodlett D.R."/>
            <person name="Kaul R."/>
            <person name="Miller S.I."/>
            <person name="Brittnacher M.J."/>
        </authorList>
    </citation>
    <scope>NUCLEOTIDE SEQUENCE [LARGE SCALE GENOMIC DNA]</scope>
    <source>
        <strain>U112</strain>
    </source>
</reference>
<sequence length="96" mass="10846">MANFVLKAEKREDLGTGASRRLRRAGKIPAVIYGGEKEAVSVLLDHDKVLHSTEDKAFFSSEITLDIDGKQEKVIIKALQRHPYKVKLIHADFMRV</sequence>
<gene>
    <name evidence="1" type="primary">rplY</name>
    <name type="ordered locus">FTN_1007</name>
</gene>
<protein>
    <recommendedName>
        <fullName evidence="1">Large ribosomal subunit protein bL25</fullName>
    </recommendedName>
    <alternativeName>
        <fullName evidence="2">50S ribosomal protein L25</fullName>
    </alternativeName>
</protein>
<feature type="chain" id="PRO_1000052954" description="Large ribosomal subunit protein bL25">
    <location>
        <begin position="1"/>
        <end position="96"/>
    </location>
</feature>
<comment type="function">
    <text evidence="1">This is one of the proteins that binds to the 5S RNA in the ribosome where it forms part of the central protuberance.</text>
</comment>
<comment type="subunit">
    <text evidence="1">Part of the 50S ribosomal subunit; part of the 5S rRNA/L5/L18/L25 subcomplex. Contacts the 5S rRNA. Binds to the 5S rRNA independently of L5 and L18.</text>
</comment>
<comment type="similarity">
    <text evidence="1">Belongs to the bacterial ribosomal protein bL25 family.</text>
</comment>
<name>RL25_FRATN</name>
<accession>A0Q6N0</accession>
<organism>
    <name type="scientific">Francisella tularensis subsp. novicida (strain U112)</name>
    <dbReference type="NCBI Taxonomy" id="401614"/>
    <lineage>
        <taxon>Bacteria</taxon>
        <taxon>Pseudomonadati</taxon>
        <taxon>Pseudomonadota</taxon>
        <taxon>Gammaproteobacteria</taxon>
        <taxon>Thiotrichales</taxon>
        <taxon>Francisellaceae</taxon>
        <taxon>Francisella</taxon>
    </lineage>
</organism>
<keyword id="KW-0687">Ribonucleoprotein</keyword>
<keyword id="KW-0689">Ribosomal protein</keyword>
<keyword id="KW-0694">RNA-binding</keyword>
<keyword id="KW-0699">rRNA-binding</keyword>
<proteinExistence type="inferred from homology"/>
<evidence type="ECO:0000255" key="1">
    <source>
        <dbReference type="HAMAP-Rule" id="MF_01336"/>
    </source>
</evidence>
<evidence type="ECO:0000305" key="2"/>
<dbReference type="EMBL" id="CP000439">
    <property type="protein sequence ID" value="ABK89895.1"/>
    <property type="molecule type" value="Genomic_DNA"/>
</dbReference>
<dbReference type="RefSeq" id="WP_003018840.1">
    <property type="nucleotide sequence ID" value="NZ_CP009633.1"/>
</dbReference>
<dbReference type="SMR" id="A0Q6N0"/>
<dbReference type="GeneID" id="75265258"/>
<dbReference type="KEGG" id="ftn:FTN_1007"/>
<dbReference type="KEGG" id="ftx:AW25_1002"/>
<dbReference type="BioCyc" id="FTUL401614:G1G75-1050-MONOMER"/>
<dbReference type="Proteomes" id="UP000000762">
    <property type="component" value="Chromosome"/>
</dbReference>
<dbReference type="GO" id="GO:0022625">
    <property type="term" value="C:cytosolic large ribosomal subunit"/>
    <property type="evidence" value="ECO:0007669"/>
    <property type="project" value="TreeGrafter"/>
</dbReference>
<dbReference type="GO" id="GO:0008097">
    <property type="term" value="F:5S rRNA binding"/>
    <property type="evidence" value="ECO:0007669"/>
    <property type="project" value="InterPro"/>
</dbReference>
<dbReference type="GO" id="GO:0003735">
    <property type="term" value="F:structural constituent of ribosome"/>
    <property type="evidence" value="ECO:0007669"/>
    <property type="project" value="InterPro"/>
</dbReference>
<dbReference type="GO" id="GO:0006412">
    <property type="term" value="P:translation"/>
    <property type="evidence" value="ECO:0007669"/>
    <property type="project" value="UniProtKB-UniRule"/>
</dbReference>
<dbReference type="CDD" id="cd00495">
    <property type="entry name" value="Ribosomal_L25_TL5_CTC"/>
    <property type="match status" value="1"/>
</dbReference>
<dbReference type="FunFam" id="2.40.240.10:FF:000002">
    <property type="entry name" value="50S ribosomal protein L25"/>
    <property type="match status" value="1"/>
</dbReference>
<dbReference type="Gene3D" id="2.40.240.10">
    <property type="entry name" value="Ribosomal Protein L25, Chain P"/>
    <property type="match status" value="1"/>
</dbReference>
<dbReference type="HAMAP" id="MF_01336">
    <property type="entry name" value="Ribosomal_bL25"/>
    <property type="match status" value="1"/>
</dbReference>
<dbReference type="InterPro" id="IPR020056">
    <property type="entry name" value="Rbsml_bL25/Gln-tRNA_synth_N"/>
</dbReference>
<dbReference type="InterPro" id="IPR011035">
    <property type="entry name" value="Ribosomal_bL25/Gln-tRNA_synth"/>
</dbReference>
<dbReference type="InterPro" id="IPR001021">
    <property type="entry name" value="Ribosomal_bL25_long"/>
</dbReference>
<dbReference type="InterPro" id="IPR020055">
    <property type="entry name" value="Ribosomal_bL25_short"/>
</dbReference>
<dbReference type="InterPro" id="IPR029751">
    <property type="entry name" value="Ribosomal_L25_dom"/>
</dbReference>
<dbReference type="InterPro" id="IPR020930">
    <property type="entry name" value="Ribosomal_uL5_bac-type"/>
</dbReference>
<dbReference type="NCBIfam" id="TIGR00731">
    <property type="entry name" value="bL25_bact_ctc"/>
    <property type="match status" value="1"/>
</dbReference>
<dbReference type="NCBIfam" id="NF004612">
    <property type="entry name" value="PRK05943.1"/>
    <property type="match status" value="1"/>
</dbReference>
<dbReference type="PANTHER" id="PTHR33284">
    <property type="entry name" value="RIBOSOMAL PROTEIN L25/GLN-TRNA SYNTHETASE, ANTI-CODON-BINDING DOMAIN-CONTAINING PROTEIN"/>
    <property type="match status" value="1"/>
</dbReference>
<dbReference type="PANTHER" id="PTHR33284:SF1">
    <property type="entry name" value="RIBOSOMAL PROTEIN L25_GLN-TRNA SYNTHETASE, ANTI-CODON-BINDING DOMAIN-CONTAINING PROTEIN"/>
    <property type="match status" value="1"/>
</dbReference>
<dbReference type="Pfam" id="PF01386">
    <property type="entry name" value="Ribosomal_L25p"/>
    <property type="match status" value="1"/>
</dbReference>
<dbReference type="SUPFAM" id="SSF50715">
    <property type="entry name" value="Ribosomal protein L25-like"/>
    <property type="match status" value="1"/>
</dbReference>